<reference key="1">
    <citation type="journal article" date="2003" name="Curr. Biol.">
        <title>The C. elegans Tousled-like kinase (TLK-1) has an essential role in transcription.</title>
        <authorList>
            <person name="Han Z."/>
            <person name="Saam J.R."/>
            <person name="Adams H.P."/>
            <person name="Mango S.E."/>
            <person name="Schumacher J.M."/>
        </authorList>
    </citation>
    <scope>NUCLEOTIDE SEQUENCE [MRNA] (ISOFORM A)</scope>
    <scope>FUNCTION</scope>
    <scope>AUTOPHOSPHORYLATION</scope>
    <scope>SUBCELLULAR LOCATION</scope>
    <scope>DEVELOPMENTAL STAGE</scope>
</reference>
<reference key="2">
    <citation type="journal article" date="1994" name="Nature">
        <title>2.2 Mb of contiguous nucleotide sequence from chromosome III of C. elegans.</title>
        <authorList>
            <person name="Wilson R."/>
            <person name="Ainscough R."/>
            <person name="Anderson K."/>
            <person name="Baynes C."/>
            <person name="Berks M."/>
            <person name="Bonfield J."/>
            <person name="Burton J."/>
            <person name="Connell M."/>
            <person name="Copsey T."/>
            <person name="Cooper J."/>
            <person name="Coulson A."/>
            <person name="Craxton M."/>
            <person name="Dear S."/>
            <person name="Du Z."/>
            <person name="Durbin R."/>
            <person name="Favello A."/>
            <person name="Fraser A."/>
            <person name="Fulton L."/>
            <person name="Gardner A."/>
            <person name="Green P."/>
            <person name="Hawkins T."/>
            <person name="Hillier L."/>
            <person name="Jier M."/>
            <person name="Johnston L."/>
            <person name="Jones M."/>
            <person name="Kershaw J."/>
            <person name="Kirsten J."/>
            <person name="Laisster N."/>
            <person name="Latreille P."/>
            <person name="Lightning J."/>
            <person name="Lloyd C."/>
            <person name="Mortimore B."/>
            <person name="O'Callaghan M."/>
            <person name="Parsons J."/>
            <person name="Percy C."/>
            <person name="Rifken L."/>
            <person name="Roopra A."/>
            <person name="Saunders D."/>
            <person name="Shownkeen R."/>
            <person name="Sims M."/>
            <person name="Smaldon N."/>
            <person name="Smith A."/>
            <person name="Smith M."/>
            <person name="Sonnhammer E."/>
            <person name="Staden R."/>
            <person name="Sulston J."/>
            <person name="Thierry-Mieg J."/>
            <person name="Thomas K."/>
            <person name="Vaudin M."/>
            <person name="Vaughan K."/>
            <person name="Waterston R."/>
            <person name="Watson A."/>
            <person name="Weinstock L."/>
            <person name="Wilkinson-Sproat J."/>
            <person name="Wohldman P."/>
        </authorList>
    </citation>
    <scope>NUCLEOTIDE SEQUENCE [LARGE SCALE GENOMIC DNA]</scope>
    <source>
        <strain>Bristol N2</strain>
    </source>
</reference>
<reference key="3">
    <citation type="journal article" date="1998" name="Science">
        <title>Genome sequence of the nematode C. elegans: a platform for investigating biology.</title>
        <authorList>
            <consortium name="The C. elegans sequencing consortium"/>
        </authorList>
    </citation>
    <scope>NUCLEOTIDE SEQUENCE [LARGE SCALE GENOMIC DNA]</scope>
    <scope>ALTERNATIVE SPLICING</scope>
    <source>
        <strain>Bristol N2</strain>
    </source>
</reference>
<reference key="4">
    <citation type="journal article" date="2005" name="Curr. Biol.">
        <title>The C. elegans Tousled-like kinase contributes to chromosome segregation as a substrate and regulator of the Aurora B kinase.</title>
        <authorList>
            <person name="Han Z."/>
            <person name="Riefler G.M."/>
            <person name="Saam J.R."/>
            <person name="Mango S.E."/>
            <person name="Schumacher J.M."/>
        </authorList>
    </citation>
    <scope>INTERACTION WITH AIR-2</scope>
    <scope>PHOSPHORYLATION AT SER-634</scope>
</reference>
<name>TLK1_CAEEL</name>
<gene>
    <name type="primary">tlk-1</name>
    <name type="ORF">C07A9.3</name>
</gene>
<protein>
    <recommendedName>
        <fullName>Serine/threonine-protein kinase tousled-like 1</fullName>
        <ecNumber>2.7.11.1</ecNumber>
    </recommendedName>
    <alternativeName>
        <fullName>Tousled-like kinase 1</fullName>
    </alternativeName>
</protein>
<accession>P34314</accession>
<accession>P34323</accession>
<accession>Q6SSJ1</accession>
<accession>Q8I4N0</accession>
<feature type="chain" id="PRO_0000086756" description="Serine/threonine-protein kinase tousled-like 1">
    <location>
        <begin position="1"/>
        <end position="965"/>
    </location>
</feature>
<feature type="domain" description="Protein kinase" evidence="1">
    <location>
        <begin position="651"/>
        <end position="928"/>
    </location>
</feature>
<feature type="region of interest" description="Disordered" evidence="3">
    <location>
        <begin position="1"/>
        <end position="22"/>
    </location>
</feature>
<feature type="region of interest" description="Disordered" evidence="3">
    <location>
        <begin position="35"/>
        <end position="72"/>
    </location>
</feature>
<feature type="region of interest" description="Disordered" evidence="3">
    <location>
        <begin position="95"/>
        <end position="120"/>
    </location>
</feature>
<feature type="region of interest" description="Disordered" evidence="3">
    <location>
        <begin position="172"/>
        <end position="292"/>
    </location>
</feature>
<feature type="region of interest" description="Disordered" evidence="3">
    <location>
        <begin position="320"/>
        <end position="402"/>
    </location>
</feature>
<feature type="region of interest" description="Disordered" evidence="3">
    <location>
        <begin position="538"/>
        <end position="576"/>
    </location>
</feature>
<feature type="compositionally biased region" description="Gly residues" evidence="3">
    <location>
        <begin position="10"/>
        <end position="21"/>
    </location>
</feature>
<feature type="compositionally biased region" description="Polar residues" evidence="3">
    <location>
        <begin position="42"/>
        <end position="52"/>
    </location>
</feature>
<feature type="compositionally biased region" description="Low complexity" evidence="3">
    <location>
        <begin position="172"/>
        <end position="231"/>
    </location>
</feature>
<feature type="compositionally biased region" description="Polar residues" evidence="3">
    <location>
        <begin position="233"/>
        <end position="244"/>
    </location>
</feature>
<feature type="compositionally biased region" description="Polar residues" evidence="3">
    <location>
        <begin position="320"/>
        <end position="341"/>
    </location>
</feature>
<feature type="compositionally biased region" description="Low complexity" evidence="3">
    <location>
        <begin position="342"/>
        <end position="355"/>
    </location>
</feature>
<feature type="compositionally biased region" description="Polar residues" evidence="3">
    <location>
        <begin position="365"/>
        <end position="381"/>
    </location>
</feature>
<feature type="compositionally biased region" description="Low complexity" evidence="3">
    <location>
        <begin position="382"/>
        <end position="401"/>
    </location>
</feature>
<feature type="compositionally biased region" description="Polar residues" evidence="3">
    <location>
        <begin position="552"/>
        <end position="572"/>
    </location>
</feature>
<feature type="active site" description="Proton acceptor" evidence="1 2">
    <location>
        <position position="781"/>
    </location>
</feature>
<feature type="binding site" evidence="1">
    <location>
        <begin position="657"/>
        <end position="665"/>
    </location>
    <ligand>
        <name>ATP</name>
        <dbReference type="ChEBI" id="CHEBI:30616"/>
    </ligand>
</feature>
<feature type="binding site" evidence="1">
    <location>
        <position position="680"/>
    </location>
    <ligand>
        <name>ATP</name>
        <dbReference type="ChEBI" id="CHEBI:30616"/>
    </ligand>
</feature>
<feature type="modified residue" description="Phosphoserine" evidence="5">
    <location>
        <position position="634"/>
    </location>
</feature>
<feature type="splice variant" id="VSP_011154" description="In isoform a." evidence="6">
    <original>LLLVIITLCQHSNRSEDRLCVSNV</original>
    <variation>VSSPSIPRSPSVNREDDNM</variation>
    <location>
        <begin position="942"/>
        <end position="965"/>
    </location>
</feature>
<dbReference type="EC" id="2.7.11.1"/>
<dbReference type="EMBL" id="AY450852">
    <property type="protein sequence ID" value="AAR18092.1"/>
    <property type="molecule type" value="mRNA"/>
</dbReference>
<dbReference type="EMBL" id="Z29094">
    <property type="protein sequence ID" value="CAA82347.3"/>
    <property type="molecule type" value="Genomic_DNA"/>
</dbReference>
<dbReference type="EMBL" id="Z29094">
    <property type="protein sequence ID" value="CAD45580.2"/>
    <property type="molecule type" value="Genomic_DNA"/>
</dbReference>
<dbReference type="PIR" id="H88562">
    <property type="entry name" value="H88562"/>
</dbReference>
<dbReference type="PIR" id="S40704">
    <property type="entry name" value="S40704"/>
</dbReference>
<dbReference type="PIR" id="S40712">
    <property type="entry name" value="S40712"/>
</dbReference>
<dbReference type="RefSeq" id="NP_499145.2">
    <molecule id="P34314-2"/>
    <property type="nucleotide sequence ID" value="NM_066744.6"/>
</dbReference>
<dbReference type="RefSeq" id="NP_871642.2">
    <molecule id="P34314-1"/>
    <property type="nucleotide sequence ID" value="NM_181913.5"/>
</dbReference>
<dbReference type="SMR" id="P34314"/>
<dbReference type="BioGRID" id="41564">
    <property type="interactions" value="6"/>
</dbReference>
<dbReference type="FunCoup" id="P34314">
    <property type="interactions" value="2865"/>
</dbReference>
<dbReference type="IntAct" id="P34314">
    <property type="interactions" value="3"/>
</dbReference>
<dbReference type="MINT" id="P34314"/>
<dbReference type="STRING" id="6239.C07A9.3b.1"/>
<dbReference type="iPTMnet" id="P34314"/>
<dbReference type="PaxDb" id="6239-C07A9.3b"/>
<dbReference type="PeptideAtlas" id="P34314"/>
<dbReference type="EnsemblMetazoa" id="C07A9.3a.1">
    <molecule id="P34314-2"/>
    <property type="protein sequence ID" value="C07A9.3a.1"/>
    <property type="gene ID" value="WBGene00006579"/>
</dbReference>
<dbReference type="EnsemblMetazoa" id="C07A9.3b.1">
    <molecule id="P34314-1"/>
    <property type="protein sequence ID" value="C07A9.3b.1"/>
    <property type="gene ID" value="WBGene00006579"/>
</dbReference>
<dbReference type="GeneID" id="176369"/>
<dbReference type="KEGG" id="cel:CELE_C07A9.3"/>
<dbReference type="UCSC" id="C07A9.3a">
    <molecule id="P34314-1"/>
    <property type="organism name" value="c. elegans"/>
</dbReference>
<dbReference type="AGR" id="WB:WBGene00006579"/>
<dbReference type="CTD" id="176369"/>
<dbReference type="WormBase" id="C07A9.3a">
    <molecule id="P34314-2"/>
    <property type="protein sequence ID" value="CE36353"/>
    <property type="gene ID" value="WBGene00006579"/>
    <property type="gene designation" value="tlk-1"/>
</dbReference>
<dbReference type="WormBase" id="C07A9.3b">
    <molecule id="P34314-1"/>
    <property type="protein sequence ID" value="CE36354"/>
    <property type="gene ID" value="WBGene00006579"/>
    <property type="gene designation" value="tlk-1"/>
</dbReference>
<dbReference type="eggNOG" id="KOG1151">
    <property type="taxonomic scope" value="Eukaryota"/>
</dbReference>
<dbReference type="InParanoid" id="P34314"/>
<dbReference type="OMA" id="CRIVKQY"/>
<dbReference type="OrthoDB" id="346907at2759"/>
<dbReference type="PhylomeDB" id="P34314"/>
<dbReference type="PRO" id="PR:P34314"/>
<dbReference type="Proteomes" id="UP000001940">
    <property type="component" value="Chromosome III"/>
</dbReference>
<dbReference type="Bgee" id="WBGene00006579">
    <property type="expression patterns" value="Expressed in embryo and 4 other cell types or tissues"/>
</dbReference>
<dbReference type="ExpressionAtlas" id="P34314">
    <property type="expression patterns" value="baseline and differential"/>
</dbReference>
<dbReference type="GO" id="GO:0000785">
    <property type="term" value="C:chromatin"/>
    <property type="evidence" value="ECO:0000314"/>
    <property type="project" value="WormBase"/>
</dbReference>
<dbReference type="GO" id="GO:0005634">
    <property type="term" value="C:nucleus"/>
    <property type="evidence" value="ECO:0000314"/>
    <property type="project" value="UniProtKB"/>
</dbReference>
<dbReference type="GO" id="GO:0005524">
    <property type="term" value="F:ATP binding"/>
    <property type="evidence" value="ECO:0007669"/>
    <property type="project" value="UniProtKB-KW"/>
</dbReference>
<dbReference type="GO" id="GO:0004672">
    <property type="term" value="F:protein kinase activity"/>
    <property type="evidence" value="ECO:0000314"/>
    <property type="project" value="UniProtKB"/>
</dbReference>
<dbReference type="GO" id="GO:0106310">
    <property type="term" value="F:protein serine kinase activity"/>
    <property type="evidence" value="ECO:0007669"/>
    <property type="project" value="RHEA"/>
</dbReference>
<dbReference type="GO" id="GO:0004674">
    <property type="term" value="F:protein serine/threonine kinase activity"/>
    <property type="evidence" value="ECO:0000318"/>
    <property type="project" value="GO_Central"/>
</dbReference>
<dbReference type="GO" id="GO:0007059">
    <property type="term" value="P:chromosome segregation"/>
    <property type="evidence" value="ECO:0000318"/>
    <property type="project" value="GO_Central"/>
</dbReference>
<dbReference type="GO" id="GO:0035556">
    <property type="term" value="P:intracellular signal transduction"/>
    <property type="evidence" value="ECO:0000318"/>
    <property type="project" value="GO_Central"/>
</dbReference>
<dbReference type="GO" id="GO:0006357">
    <property type="term" value="P:regulation of transcription by RNA polymerase II"/>
    <property type="evidence" value="ECO:0000315"/>
    <property type="project" value="UniProtKB"/>
</dbReference>
<dbReference type="CDD" id="cd13990">
    <property type="entry name" value="STKc_TLK"/>
    <property type="match status" value="1"/>
</dbReference>
<dbReference type="FunFam" id="1.10.510.10:FF:000698">
    <property type="entry name" value="Serine/threonine-protein kinase tousled-like 1"/>
    <property type="match status" value="1"/>
</dbReference>
<dbReference type="Gene3D" id="1.10.510.10">
    <property type="entry name" value="Transferase(Phosphotransferase) domain 1"/>
    <property type="match status" value="1"/>
</dbReference>
<dbReference type="InterPro" id="IPR011009">
    <property type="entry name" value="Kinase-like_dom_sf"/>
</dbReference>
<dbReference type="InterPro" id="IPR000719">
    <property type="entry name" value="Prot_kinase_dom"/>
</dbReference>
<dbReference type="InterPro" id="IPR017441">
    <property type="entry name" value="Protein_kinase_ATP_BS"/>
</dbReference>
<dbReference type="InterPro" id="IPR008271">
    <property type="entry name" value="Ser/Thr_kinase_AS"/>
</dbReference>
<dbReference type="PANTHER" id="PTHR22974">
    <property type="entry name" value="MIXED LINEAGE PROTEIN KINASE"/>
    <property type="match status" value="1"/>
</dbReference>
<dbReference type="PANTHER" id="PTHR22974:SF23">
    <property type="entry name" value="TOUSLED-LIKE KINASE, ISOFORM G"/>
    <property type="match status" value="1"/>
</dbReference>
<dbReference type="Pfam" id="PF00069">
    <property type="entry name" value="Pkinase"/>
    <property type="match status" value="1"/>
</dbReference>
<dbReference type="SMART" id="SM00220">
    <property type="entry name" value="S_TKc"/>
    <property type="match status" value="1"/>
</dbReference>
<dbReference type="SUPFAM" id="SSF56112">
    <property type="entry name" value="Protein kinase-like (PK-like)"/>
    <property type="match status" value="1"/>
</dbReference>
<dbReference type="PROSITE" id="PS00107">
    <property type="entry name" value="PROTEIN_KINASE_ATP"/>
    <property type="match status" value="1"/>
</dbReference>
<dbReference type="PROSITE" id="PS50011">
    <property type="entry name" value="PROTEIN_KINASE_DOM"/>
    <property type="match status" value="1"/>
</dbReference>
<dbReference type="PROSITE" id="PS00108">
    <property type="entry name" value="PROTEIN_KINASE_ST"/>
    <property type="match status" value="1"/>
</dbReference>
<comment type="function">
    <text evidence="4">Essential for appropriate transcription during embryonic development. May act during transcription elongation to activate the RNA polymerase II large subunit (ama-1) by phosphorylating the Ser-2 residues of the C-terminal domain 7-residue repeats. Does not phosphorylate histone H3.</text>
</comment>
<comment type="catalytic activity">
    <reaction>
        <text>L-seryl-[protein] + ATP = O-phospho-L-seryl-[protein] + ADP + H(+)</text>
        <dbReference type="Rhea" id="RHEA:17989"/>
        <dbReference type="Rhea" id="RHEA-COMP:9863"/>
        <dbReference type="Rhea" id="RHEA-COMP:11604"/>
        <dbReference type="ChEBI" id="CHEBI:15378"/>
        <dbReference type="ChEBI" id="CHEBI:29999"/>
        <dbReference type="ChEBI" id="CHEBI:30616"/>
        <dbReference type="ChEBI" id="CHEBI:83421"/>
        <dbReference type="ChEBI" id="CHEBI:456216"/>
        <dbReference type="EC" id="2.7.11.1"/>
    </reaction>
</comment>
<comment type="catalytic activity">
    <reaction>
        <text>L-threonyl-[protein] + ATP = O-phospho-L-threonyl-[protein] + ADP + H(+)</text>
        <dbReference type="Rhea" id="RHEA:46608"/>
        <dbReference type="Rhea" id="RHEA-COMP:11060"/>
        <dbReference type="Rhea" id="RHEA-COMP:11605"/>
        <dbReference type="ChEBI" id="CHEBI:15378"/>
        <dbReference type="ChEBI" id="CHEBI:30013"/>
        <dbReference type="ChEBI" id="CHEBI:30616"/>
        <dbReference type="ChEBI" id="CHEBI:61977"/>
        <dbReference type="ChEBI" id="CHEBI:456216"/>
        <dbReference type="EC" id="2.7.11.1"/>
    </reaction>
</comment>
<comment type="subunit">
    <text evidence="5">Interacts with air-2.</text>
</comment>
<comment type="interaction">
    <interactant intactId="EBI-3890382">
        <id>P34314</id>
    </interactant>
    <interactant intactId="EBI-312947">
        <id>O01427</id>
        <label>air-2</label>
    </interactant>
    <organismsDiffer>false</organismsDiffer>
    <experiments>3</experiments>
</comment>
<comment type="subcellular location">
    <subcellularLocation>
        <location evidence="4">Nucleus</location>
    </subcellularLocation>
</comment>
<comment type="alternative products">
    <event type="alternative splicing"/>
    <isoform>
        <id>P34314-1</id>
        <name>b</name>
        <sequence type="displayed"/>
    </isoform>
    <isoform>
        <id>P34314-2</id>
        <name>a</name>
        <sequence type="described" ref="VSP_011154"/>
    </isoform>
</comment>
<comment type="developmental stage">
    <text evidence="4">Expressed in embryos from the 2-cell stage until morphogenesis. May also be maternally expressed. Not expressed during mitosis.</text>
</comment>
<comment type="PTM">
    <text evidence="5">Autophosphorylates in vitro. Phosphorylation on Ser-634 by air-2 enhances catalytic activity.</text>
</comment>
<comment type="similarity">
    <text evidence="1">Belongs to the protein kinase superfamily. Ser/Thr protein kinase family.</text>
</comment>
<proteinExistence type="evidence at protein level"/>
<sequence length="965" mass="109274">MSMLSMDGIVAGGGSSSGGGERSFVLEQKMFNTGPQNKALPTVQSSGSSSNHAPIVGESPLGTVSSTMATGDTGRVGNVTYMSSGMLGATQFMPQNSSHPSTSVMMQQVPPQNGGATRSSPTEMQQCMQAMSEDSIEMRDYNSGVHHMHPHQMQMQQQQQHHQQQYNMSYHNHQQQMQQMHYHQQQQQYQQQQAQHHQMYAPQIQQQQQQPQQQSQQQSAQQPQQSSAALQHVNESSNLSSAGSISDREPEQHGGTPQRPTAPQSSTATDKKTRKRRKAGPTEDQATPKQERKITEFMKVGGEVASGNSVARCLLTEYHQNQGSPKRQPAVQQNGSNSYDSQQQQPQMNQHEMQNSYWGVATPSLGVNNRGTPTPTQQQHYSSDSNSNSNQSPPGQGNQSGRMVRTIDEETQTDSSLSQANPQNADEVAKMNRIIEDHRRQIEELNSKNSLERRKNEASKETIKRLLIDKNQIERKALRDKTAADSPRIGCFKTTRTGDSFRDQWVDGWAFAEMDKKTEQINAERNEIASASALLKKRKPLGIGKEPKRPQAVNSQNDSNGMQPSTSSNTNGDDAIFRRPEEPKEIQYQEYIELDEIYKLRREHLRKEETDLSMEKERLEKEKQHHVRELKRASNESASQFNDHRLLHKRYLMLNLLGKGGFSEVWKAFDIEENRYVACKIHHVNKDWKEEKKANYVKHAMREKDIHKSLDHCRIVKQYDLLTIDNHSFCTVLEYVPGNDLDFYLKQNRSISEKEARSIIMQVVSALVYLNEKSTPIIHYDLKPANILLESGNTSGAIKITDFGLSKIMEGESDDHDLGIELTSQFAGTYWYLPPETFIVPPPKITCKVDVWSIGVIFYQCIYGKKPFGNDLTQQKILEYNTIINAREVSFPSKPQVSSAAQDFIRRCLQYRKEDRADVFELAKHELFRPRGAIRASVAGSLLLVIITLCQHSNRSEDRLCVSNV</sequence>
<organism>
    <name type="scientific">Caenorhabditis elegans</name>
    <dbReference type="NCBI Taxonomy" id="6239"/>
    <lineage>
        <taxon>Eukaryota</taxon>
        <taxon>Metazoa</taxon>
        <taxon>Ecdysozoa</taxon>
        <taxon>Nematoda</taxon>
        <taxon>Chromadorea</taxon>
        <taxon>Rhabditida</taxon>
        <taxon>Rhabditina</taxon>
        <taxon>Rhabditomorpha</taxon>
        <taxon>Rhabditoidea</taxon>
        <taxon>Rhabditidae</taxon>
        <taxon>Peloderinae</taxon>
        <taxon>Caenorhabditis</taxon>
    </lineage>
</organism>
<evidence type="ECO:0000255" key="1">
    <source>
        <dbReference type="PROSITE-ProRule" id="PRU00159"/>
    </source>
</evidence>
<evidence type="ECO:0000255" key="2">
    <source>
        <dbReference type="PROSITE-ProRule" id="PRU10027"/>
    </source>
</evidence>
<evidence type="ECO:0000256" key="3">
    <source>
        <dbReference type="SAM" id="MobiDB-lite"/>
    </source>
</evidence>
<evidence type="ECO:0000269" key="4">
    <source>
    </source>
</evidence>
<evidence type="ECO:0000269" key="5">
    <source>
    </source>
</evidence>
<evidence type="ECO:0000303" key="6">
    <source>
    </source>
</evidence>
<keyword id="KW-0025">Alternative splicing</keyword>
<keyword id="KW-0067">ATP-binding</keyword>
<keyword id="KW-0217">Developmental protein</keyword>
<keyword id="KW-0418">Kinase</keyword>
<keyword id="KW-0547">Nucleotide-binding</keyword>
<keyword id="KW-0539">Nucleus</keyword>
<keyword id="KW-0597">Phosphoprotein</keyword>
<keyword id="KW-1185">Reference proteome</keyword>
<keyword id="KW-0723">Serine/threonine-protein kinase</keyword>
<keyword id="KW-0804">Transcription</keyword>
<keyword id="KW-0805">Transcription regulation</keyword>
<keyword id="KW-0808">Transferase</keyword>